<gene>
    <name type="primary">Cyp3a13</name>
    <name type="synonym">Cyp3a-13</name>
</gene>
<protein>
    <recommendedName>
        <fullName>Cytochrome P450 3A13</fullName>
        <ecNumber>1.14.14.1</ecNumber>
    </recommendedName>
    <alternativeName>
        <fullName>CYPIIIA13</fullName>
    </alternativeName>
</protein>
<comment type="function">
    <text>Can activate aflatoxin B1 to a genotoxic product.</text>
</comment>
<comment type="catalytic activity">
    <reaction>
        <text>an organic molecule + reduced [NADPH--hemoprotein reductase] + O2 = an alcohol + oxidized [NADPH--hemoprotein reductase] + H2O + H(+)</text>
        <dbReference type="Rhea" id="RHEA:17149"/>
        <dbReference type="Rhea" id="RHEA-COMP:11964"/>
        <dbReference type="Rhea" id="RHEA-COMP:11965"/>
        <dbReference type="ChEBI" id="CHEBI:15377"/>
        <dbReference type="ChEBI" id="CHEBI:15378"/>
        <dbReference type="ChEBI" id="CHEBI:15379"/>
        <dbReference type="ChEBI" id="CHEBI:30879"/>
        <dbReference type="ChEBI" id="CHEBI:57618"/>
        <dbReference type="ChEBI" id="CHEBI:58210"/>
        <dbReference type="ChEBI" id="CHEBI:142491"/>
        <dbReference type="EC" id="1.14.14.1"/>
    </reaction>
</comment>
<comment type="cofactor">
    <cofactor evidence="1">
        <name>heme</name>
        <dbReference type="ChEBI" id="CHEBI:30413"/>
    </cofactor>
</comment>
<comment type="subcellular location">
    <subcellularLocation>
        <location>Endoplasmic reticulum membrane</location>
        <topology>Peripheral membrane protein</topology>
    </subcellularLocation>
    <subcellularLocation>
        <location>Microsome membrane</location>
        <topology>Peripheral membrane protein</topology>
    </subcellularLocation>
</comment>
<comment type="induction">
    <text>P450 can be induced to high levels in liver and other tissues by various foreign compounds, including drugs, pesticides, and carcinogens.</text>
</comment>
<comment type="similarity">
    <text evidence="2">Belongs to the cytochrome P450 family.</text>
</comment>
<keyword id="KW-0256">Endoplasmic reticulum</keyword>
<keyword id="KW-0349">Heme</keyword>
<keyword id="KW-0408">Iron</keyword>
<keyword id="KW-0472">Membrane</keyword>
<keyword id="KW-0479">Metal-binding</keyword>
<keyword id="KW-0492">Microsome</keyword>
<keyword id="KW-0503">Monooxygenase</keyword>
<keyword id="KW-0560">Oxidoreductase</keyword>
<keyword id="KW-1185">Reference proteome</keyword>
<proteinExistence type="evidence at protein level"/>
<accession>Q64464</accession>
<name>CP3AD_MOUSE</name>
<sequence>MDLIPNFSMETWMLLATSLVLLYLYGTHSHGIFKKLGIPGPKPLPFLGTILAYQKGFWECDIQCHKKYGKMWGLYDGRQPVLAITDPDIIKTVLVKECYSTFTNRRRFGPVGILKKAISISENEEWKRIRALLSPTFTSGRLKEMFPIINQFTDVLVRNMRQGLGEGKPTSMKDIFGAYSMDVITATSFGVNIDSLNNPQDPFVEKIKKLLKFDIFDPLFLSVTLFPFLTPVFDALNVSLFPRDVISFFTTSVERMKENRMKEKEKQRVDFLQLMINSQNYKTKESHKALSDVEIVAQSVIFIFAGYETTSSALSFALYLLAIHPDVQKKLQDEIDAALPNKAPATYDTLLQMEYLDMVVNETLRLYPIAGRLERVCKTDVEINGLFIPKGTVVMIPTFALHKDPKYWPEPEEFRPERFSKKNQDSINPYMYLPFGSGPRNCIGMRFALINMKVALVRVLQNFTVQPCKETEIPLKLSKQGLLQPENPLLLKVVSRDETVSDE</sequence>
<reference key="1">
    <citation type="journal article" date="1994" name="Biochim. Biophys. Acta">
        <title>Molecular cloning and functional expression of a mouse cytochrome P-450 (Cyp3a-13): examination of Cyp3a-13 enzyme to activate aflatoxin B1 (AFB1).</title>
        <authorList>
            <person name="Yanagimoto T."/>
            <person name="Itoh S."/>
            <person name="Sawada M."/>
            <person name="Hashimoto H."/>
            <person name="Kamataki T."/>
        </authorList>
    </citation>
    <scope>NUCLEOTIDE SEQUENCE [MRNA]</scope>
    <source>
        <strain>ddY</strain>
        <tissue>Liver</tissue>
    </source>
</reference>
<reference key="2">
    <citation type="journal article" date="2004" name="Genome Res.">
        <title>The status, quality, and expansion of the NIH full-length cDNA project: the Mammalian Gene Collection (MGC).</title>
        <authorList>
            <consortium name="The MGC Project Team"/>
        </authorList>
    </citation>
    <scope>NUCLEOTIDE SEQUENCE [LARGE SCALE MRNA]</scope>
    <source>
        <tissue>Olfactory epithelium</tissue>
    </source>
</reference>
<reference key="3">
    <citation type="journal article" date="2010" name="Cell">
        <title>A tissue-specific atlas of mouse protein phosphorylation and expression.</title>
        <authorList>
            <person name="Huttlin E.L."/>
            <person name="Jedrychowski M.P."/>
            <person name="Elias J.E."/>
            <person name="Goswami T."/>
            <person name="Rad R."/>
            <person name="Beausoleil S.A."/>
            <person name="Villen J."/>
            <person name="Haas W."/>
            <person name="Sowa M.E."/>
            <person name="Gygi S.P."/>
        </authorList>
    </citation>
    <scope>IDENTIFICATION BY MASS SPECTROMETRY [LARGE SCALE ANALYSIS]</scope>
    <source>
        <tissue>Liver</tissue>
    </source>
</reference>
<organism>
    <name type="scientific">Mus musculus</name>
    <name type="common">Mouse</name>
    <dbReference type="NCBI Taxonomy" id="10090"/>
    <lineage>
        <taxon>Eukaryota</taxon>
        <taxon>Metazoa</taxon>
        <taxon>Chordata</taxon>
        <taxon>Craniata</taxon>
        <taxon>Vertebrata</taxon>
        <taxon>Euteleostomi</taxon>
        <taxon>Mammalia</taxon>
        <taxon>Eutheria</taxon>
        <taxon>Euarchontoglires</taxon>
        <taxon>Glires</taxon>
        <taxon>Rodentia</taxon>
        <taxon>Myomorpha</taxon>
        <taxon>Muroidea</taxon>
        <taxon>Muridae</taxon>
        <taxon>Murinae</taxon>
        <taxon>Mus</taxon>
        <taxon>Mus</taxon>
    </lineage>
</organism>
<feature type="chain" id="PRO_0000051796" description="Cytochrome P450 3A13">
    <location>
        <begin position="1"/>
        <end position="503"/>
    </location>
</feature>
<feature type="binding site" description="axial binding residue" evidence="1">
    <location>
        <position position="442"/>
    </location>
    <ligand>
        <name>heme</name>
        <dbReference type="ChEBI" id="CHEBI:30413"/>
    </ligand>
    <ligandPart>
        <name>Fe</name>
        <dbReference type="ChEBI" id="CHEBI:18248"/>
    </ligandPart>
</feature>
<dbReference type="EC" id="1.14.14.1"/>
<dbReference type="EMBL" id="X63023">
    <property type="protein sequence ID" value="CAA44754.1"/>
    <property type="molecule type" value="mRNA"/>
</dbReference>
<dbReference type="EMBL" id="BC046592">
    <property type="protein sequence ID" value="AAH46592.1"/>
    <property type="molecule type" value="mRNA"/>
</dbReference>
<dbReference type="CCDS" id="CCDS19781.1"/>
<dbReference type="PIR" id="S50211">
    <property type="entry name" value="S50211"/>
</dbReference>
<dbReference type="RefSeq" id="NP_031845.1">
    <property type="nucleotide sequence ID" value="NM_007819.4"/>
</dbReference>
<dbReference type="RefSeq" id="XP_030109981.1">
    <property type="nucleotide sequence ID" value="XM_030254121.2"/>
</dbReference>
<dbReference type="SMR" id="Q64464"/>
<dbReference type="FunCoup" id="Q64464">
    <property type="interactions" value="677"/>
</dbReference>
<dbReference type="STRING" id="10090.ENSMUSP00000031741"/>
<dbReference type="ChEMBL" id="CHEMBL3637781"/>
<dbReference type="GlyGen" id="Q64464">
    <property type="glycosylation" value="1 site, 1 O-linked glycan (1 site)"/>
</dbReference>
<dbReference type="iPTMnet" id="Q64464"/>
<dbReference type="PhosphoSitePlus" id="Q64464"/>
<dbReference type="SwissPalm" id="Q64464"/>
<dbReference type="jPOST" id="Q64464"/>
<dbReference type="PaxDb" id="10090-ENSMUSP00000031741"/>
<dbReference type="ProteomicsDB" id="283931"/>
<dbReference type="DNASU" id="13113"/>
<dbReference type="Ensembl" id="ENSMUST00000031741.8">
    <property type="protein sequence ID" value="ENSMUSP00000031741.8"/>
    <property type="gene ID" value="ENSMUSG00000029727.8"/>
</dbReference>
<dbReference type="GeneID" id="13113"/>
<dbReference type="KEGG" id="mmu:13113"/>
<dbReference type="UCSC" id="uc009aef.2">
    <property type="organism name" value="mouse"/>
</dbReference>
<dbReference type="AGR" id="MGI:88610"/>
<dbReference type="CTD" id="13113"/>
<dbReference type="MGI" id="MGI:88610">
    <property type="gene designation" value="Cyp3a13"/>
</dbReference>
<dbReference type="VEuPathDB" id="HostDB:ENSMUSG00000029727"/>
<dbReference type="eggNOG" id="KOG0158">
    <property type="taxonomic scope" value="Eukaryota"/>
</dbReference>
<dbReference type="GeneTree" id="ENSGT00950000182958"/>
<dbReference type="HOGENOM" id="CLU_001570_5_2_1"/>
<dbReference type="InParanoid" id="Q64464"/>
<dbReference type="OMA" id="MKHYGEV"/>
<dbReference type="OrthoDB" id="1470350at2759"/>
<dbReference type="PhylomeDB" id="Q64464"/>
<dbReference type="TreeFam" id="TF105087"/>
<dbReference type="Reactome" id="R-MMU-211945">
    <property type="pathway name" value="Phase I - Functionalization of compounds"/>
</dbReference>
<dbReference type="Reactome" id="R-MMU-211958">
    <property type="pathway name" value="Miscellaneous substrates"/>
</dbReference>
<dbReference type="Reactome" id="R-MMU-211981">
    <property type="pathway name" value="Xenobiotics"/>
</dbReference>
<dbReference type="Reactome" id="R-MMU-5423646">
    <property type="pathway name" value="Aflatoxin activation and detoxification"/>
</dbReference>
<dbReference type="Reactome" id="R-MMU-9027307">
    <property type="pathway name" value="Biosynthesis of maresin-like SPMs"/>
</dbReference>
<dbReference type="Reactome" id="R-MMU-9749641">
    <property type="pathway name" value="Aspirin ADME"/>
</dbReference>
<dbReference type="Reactome" id="R-MMU-9754706">
    <property type="pathway name" value="Atorvastatin ADME"/>
</dbReference>
<dbReference type="Reactome" id="R-MMU-9757110">
    <property type="pathway name" value="Prednisone ADME"/>
</dbReference>
<dbReference type="BioGRID-ORCS" id="13113">
    <property type="hits" value="4 hits in 78 CRISPR screens"/>
</dbReference>
<dbReference type="ChiTaRS" id="Cyp3a13">
    <property type="organism name" value="mouse"/>
</dbReference>
<dbReference type="PRO" id="PR:Q64464"/>
<dbReference type="Proteomes" id="UP000000589">
    <property type="component" value="Chromosome 5"/>
</dbReference>
<dbReference type="RNAct" id="Q64464">
    <property type="molecule type" value="protein"/>
</dbReference>
<dbReference type="Bgee" id="ENSMUSG00000029727">
    <property type="expression patterns" value="Expressed in small intestine Peyer's patch and 75 other cell types or tissues"/>
</dbReference>
<dbReference type="ExpressionAtlas" id="Q64464">
    <property type="expression patterns" value="baseline and differential"/>
</dbReference>
<dbReference type="GO" id="GO:0005789">
    <property type="term" value="C:endoplasmic reticulum membrane"/>
    <property type="evidence" value="ECO:0007669"/>
    <property type="project" value="UniProtKB-SubCell"/>
</dbReference>
<dbReference type="GO" id="GO:0020037">
    <property type="term" value="F:heme binding"/>
    <property type="evidence" value="ECO:0007669"/>
    <property type="project" value="InterPro"/>
</dbReference>
<dbReference type="GO" id="GO:0005506">
    <property type="term" value="F:iron ion binding"/>
    <property type="evidence" value="ECO:0007669"/>
    <property type="project" value="InterPro"/>
</dbReference>
<dbReference type="GO" id="GO:0004497">
    <property type="term" value="F:monooxygenase activity"/>
    <property type="evidence" value="ECO:0000250"/>
    <property type="project" value="UniProtKB"/>
</dbReference>
<dbReference type="GO" id="GO:0016712">
    <property type="term" value="F:oxidoreductase activity, acting on paired donors, with incorporation or reduction of molecular oxygen, reduced flavin or flavoprotein as one donor, and incorporation of one atom of oxygen"/>
    <property type="evidence" value="ECO:0007669"/>
    <property type="project" value="UniProtKB-EC"/>
</dbReference>
<dbReference type="GO" id="GO:0010628">
    <property type="term" value="P:positive regulation of gene expression"/>
    <property type="evidence" value="ECO:0000315"/>
    <property type="project" value="MGI"/>
</dbReference>
<dbReference type="CDD" id="cd20650">
    <property type="entry name" value="CYP3A"/>
    <property type="match status" value="1"/>
</dbReference>
<dbReference type="FunFam" id="1.10.630.10:FF:000096">
    <property type="entry name" value="Cytochrome P450 3A4"/>
    <property type="match status" value="1"/>
</dbReference>
<dbReference type="Gene3D" id="1.10.630.10">
    <property type="entry name" value="Cytochrome P450"/>
    <property type="match status" value="1"/>
</dbReference>
<dbReference type="InterPro" id="IPR001128">
    <property type="entry name" value="Cyt_P450"/>
</dbReference>
<dbReference type="InterPro" id="IPR017972">
    <property type="entry name" value="Cyt_P450_CS"/>
</dbReference>
<dbReference type="InterPro" id="IPR008072">
    <property type="entry name" value="Cyt_P450_E_CYP3A"/>
</dbReference>
<dbReference type="InterPro" id="IPR002402">
    <property type="entry name" value="Cyt_P450_E_grp-II"/>
</dbReference>
<dbReference type="InterPro" id="IPR036396">
    <property type="entry name" value="Cyt_P450_sf"/>
</dbReference>
<dbReference type="InterPro" id="IPR050705">
    <property type="entry name" value="Cytochrome_P450_3A"/>
</dbReference>
<dbReference type="PANTHER" id="PTHR24302:SF38">
    <property type="entry name" value="CYTOCHROME P450 3A5"/>
    <property type="match status" value="1"/>
</dbReference>
<dbReference type="PANTHER" id="PTHR24302">
    <property type="entry name" value="CYTOCHROME P450 FAMILY 3"/>
    <property type="match status" value="1"/>
</dbReference>
<dbReference type="Pfam" id="PF00067">
    <property type="entry name" value="p450"/>
    <property type="match status" value="1"/>
</dbReference>
<dbReference type="PRINTS" id="PR00464">
    <property type="entry name" value="EP450II"/>
</dbReference>
<dbReference type="PRINTS" id="PR01689">
    <property type="entry name" value="EP450IICYP3A"/>
</dbReference>
<dbReference type="PRINTS" id="PR00385">
    <property type="entry name" value="P450"/>
</dbReference>
<dbReference type="SUPFAM" id="SSF48264">
    <property type="entry name" value="Cytochrome P450"/>
    <property type="match status" value="1"/>
</dbReference>
<dbReference type="PROSITE" id="PS00086">
    <property type="entry name" value="CYTOCHROME_P450"/>
    <property type="match status" value="1"/>
</dbReference>
<evidence type="ECO:0000250" key="1"/>
<evidence type="ECO:0000305" key="2"/>